<comment type="function">
    <text evidence="1">Transfers the gamma-phosphate of ATP to the 4'-position of a tetraacyldisaccharide 1-phosphate intermediate (termed DS-1-P) to form tetraacyldisaccharide 1,4'-bis-phosphate (lipid IVA).</text>
</comment>
<comment type="catalytic activity">
    <reaction evidence="1">
        <text>a lipid A disaccharide + ATP = a lipid IVA + ADP + H(+)</text>
        <dbReference type="Rhea" id="RHEA:67840"/>
        <dbReference type="ChEBI" id="CHEBI:15378"/>
        <dbReference type="ChEBI" id="CHEBI:30616"/>
        <dbReference type="ChEBI" id="CHEBI:176343"/>
        <dbReference type="ChEBI" id="CHEBI:176425"/>
        <dbReference type="ChEBI" id="CHEBI:456216"/>
        <dbReference type="EC" id="2.7.1.130"/>
    </reaction>
</comment>
<comment type="pathway">
    <text evidence="1">Glycolipid biosynthesis; lipid IV(A) biosynthesis; lipid IV(A) from (3R)-3-hydroxytetradecanoyl-[acyl-carrier-protein] and UDP-N-acetyl-alpha-D-glucosamine: step 6/6.</text>
</comment>
<comment type="similarity">
    <text evidence="1">Belongs to the LpxK family.</text>
</comment>
<dbReference type="EC" id="2.7.1.130" evidence="1"/>
<dbReference type="EMBL" id="CP001164">
    <property type="protein sequence ID" value="ACI38794.1"/>
    <property type="molecule type" value="Genomic_DNA"/>
</dbReference>
<dbReference type="RefSeq" id="WP_000570541.1">
    <property type="nucleotide sequence ID" value="NC_011353.1"/>
</dbReference>
<dbReference type="SMR" id="B5YT49"/>
<dbReference type="KEGG" id="ecf:ECH74115_1076"/>
<dbReference type="HOGENOM" id="CLU_038816_2_0_6"/>
<dbReference type="UniPathway" id="UPA00359">
    <property type="reaction ID" value="UER00482"/>
</dbReference>
<dbReference type="GO" id="GO:0005886">
    <property type="term" value="C:plasma membrane"/>
    <property type="evidence" value="ECO:0007669"/>
    <property type="project" value="TreeGrafter"/>
</dbReference>
<dbReference type="GO" id="GO:0005524">
    <property type="term" value="F:ATP binding"/>
    <property type="evidence" value="ECO:0007669"/>
    <property type="project" value="UniProtKB-UniRule"/>
</dbReference>
<dbReference type="GO" id="GO:0009029">
    <property type="term" value="F:tetraacyldisaccharide 4'-kinase activity"/>
    <property type="evidence" value="ECO:0007669"/>
    <property type="project" value="UniProtKB-UniRule"/>
</dbReference>
<dbReference type="GO" id="GO:0009245">
    <property type="term" value="P:lipid A biosynthetic process"/>
    <property type="evidence" value="ECO:0007669"/>
    <property type="project" value="UniProtKB-UniRule"/>
</dbReference>
<dbReference type="GO" id="GO:0009244">
    <property type="term" value="P:lipopolysaccharide core region biosynthetic process"/>
    <property type="evidence" value="ECO:0007669"/>
    <property type="project" value="TreeGrafter"/>
</dbReference>
<dbReference type="HAMAP" id="MF_00409">
    <property type="entry name" value="LpxK"/>
    <property type="match status" value="1"/>
</dbReference>
<dbReference type="InterPro" id="IPR003758">
    <property type="entry name" value="LpxK"/>
</dbReference>
<dbReference type="InterPro" id="IPR027417">
    <property type="entry name" value="P-loop_NTPase"/>
</dbReference>
<dbReference type="NCBIfam" id="TIGR00682">
    <property type="entry name" value="lpxK"/>
    <property type="match status" value="1"/>
</dbReference>
<dbReference type="PANTHER" id="PTHR42724">
    <property type="entry name" value="TETRAACYLDISACCHARIDE 4'-KINASE"/>
    <property type="match status" value="1"/>
</dbReference>
<dbReference type="PANTHER" id="PTHR42724:SF1">
    <property type="entry name" value="TETRAACYLDISACCHARIDE 4'-KINASE, MITOCHONDRIAL-RELATED"/>
    <property type="match status" value="1"/>
</dbReference>
<dbReference type="Pfam" id="PF02606">
    <property type="entry name" value="LpxK"/>
    <property type="match status" value="1"/>
</dbReference>
<dbReference type="SUPFAM" id="SSF52540">
    <property type="entry name" value="P-loop containing nucleoside triphosphate hydrolases"/>
    <property type="match status" value="1"/>
</dbReference>
<evidence type="ECO:0000255" key="1">
    <source>
        <dbReference type="HAMAP-Rule" id="MF_00409"/>
    </source>
</evidence>
<feature type="chain" id="PRO_1000123705" description="Tetraacyldisaccharide 4'-kinase">
    <location>
        <begin position="1"/>
        <end position="328"/>
    </location>
</feature>
<feature type="binding site" evidence="1">
    <location>
        <begin position="55"/>
        <end position="62"/>
    </location>
    <ligand>
        <name>ATP</name>
        <dbReference type="ChEBI" id="CHEBI:30616"/>
    </ligand>
</feature>
<reference key="1">
    <citation type="journal article" date="2011" name="Proc. Natl. Acad. Sci. U.S.A.">
        <title>Genomic anatomy of Escherichia coli O157:H7 outbreaks.</title>
        <authorList>
            <person name="Eppinger M."/>
            <person name="Mammel M.K."/>
            <person name="Leclerc J.E."/>
            <person name="Ravel J."/>
            <person name="Cebula T.A."/>
        </authorList>
    </citation>
    <scope>NUCLEOTIDE SEQUENCE [LARGE SCALE GENOMIC DNA]</scope>
    <source>
        <strain>EC4115 / EHEC</strain>
    </source>
</reference>
<organism>
    <name type="scientific">Escherichia coli O157:H7 (strain EC4115 / EHEC)</name>
    <dbReference type="NCBI Taxonomy" id="444450"/>
    <lineage>
        <taxon>Bacteria</taxon>
        <taxon>Pseudomonadati</taxon>
        <taxon>Pseudomonadota</taxon>
        <taxon>Gammaproteobacteria</taxon>
        <taxon>Enterobacterales</taxon>
        <taxon>Enterobacteriaceae</taxon>
        <taxon>Escherichia</taxon>
    </lineage>
</organism>
<accession>B5YT49</accession>
<gene>
    <name evidence="1" type="primary">lpxK</name>
    <name type="ordered locus">ECH74115_1076</name>
</gene>
<keyword id="KW-0067">ATP-binding</keyword>
<keyword id="KW-0418">Kinase</keyword>
<keyword id="KW-0441">Lipid A biosynthesis</keyword>
<keyword id="KW-0444">Lipid biosynthesis</keyword>
<keyword id="KW-0443">Lipid metabolism</keyword>
<keyword id="KW-0547">Nucleotide-binding</keyword>
<keyword id="KW-0808">Transferase</keyword>
<name>LPXK_ECO5E</name>
<protein>
    <recommendedName>
        <fullName evidence="1">Tetraacyldisaccharide 4'-kinase</fullName>
        <ecNumber evidence="1">2.7.1.130</ecNumber>
    </recommendedName>
    <alternativeName>
        <fullName evidence="1">Lipid A 4'-kinase</fullName>
    </alternativeName>
</protein>
<proteinExistence type="inferred from homology"/>
<sequence>MIEKIWSGESPLWRLLLPLSWLYGLVSGAIRLCYKLKLKRAWRAPVPVVVVGNLTAGGNGKTPVVVWLVEQLQQRGIRVGVVSRGYGGKAESYPLLLSADTTTAQAGDEPVLIYQRTDAPVAVSPVRSDAVKAILAQHPDVQIIVTDDGLQHYRLARDVEIVVIDGVRRFGNGWWLPAGPMRERAGRLKSVDAVIVNGGVPRSGEIPMHLLPGQAVNLRTGTRCDVAQLEHVVAMAGIGHPPRFFATLKMCGVQPEKCVPLADHQSLNHADVSALVSTGQTLVMTEKDAVKCRAFAEENWWYLPVDAQLSGDEPAKLLAQLTSLASGN</sequence>